<keyword id="KW-0025">Alternative splicing</keyword>
<keyword id="KW-0963">Cytoplasm</keyword>
<keyword id="KW-0206">Cytoskeleton</keyword>
<keyword id="KW-0597">Phosphoprotein</keyword>
<keyword id="KW-1267">Proteomics identification</keyword>
<keyword id="KW-1185">Reference proteome</keyword>
<organism>
    <name type="scientific">Homo sapiens</name>
    <name type="common">Human</name>
    <dbReference type="NCBI Taxonomy" id="9606"/>
    <lineage>
        <taxon>Eukaryota</taxon>
        <taxon>Metazoa</taxon>
        <taxon>Chordata</taxon>
        <taxon>Craniata</taxon>
        <taxon>Vertebrata</taxon>
        <taxon>Euteleostomi</taxon>
        <taxon>Mammalia</taxon>
        <taxon>Eutheria</taxon>
        <taxon>Euarchontoglires</taxon>
        <taxon>Primates</taxon>
        <taxon>Haplorrhini</taxon>
        <taxon>Catarrhini</taxon>
        <taxon>Hominidae</taxon>
        <taxon>Homo</taxon>
    </lineage>
</organism>
<sequence>MPFNGEKQCVGEDQPSDSDSSRFSESMASLSDYECSRQSFASDSSSKSSSPASTSPPRVVTFDEVMATARNLSNLTLAHEIAVNENFQLKQEALPEKSLAGRVKHIVHQAFWDVLDSELNADPPEFEHAIKLFEEIREILLSFLTPGGNRLRNQICEVLDTDLIRQQAEHSAVDIQGLANYVISTMGKLCAPVRDNDIRELKATGNIVEVLRQIFHVLDLMQMDMANFTIMSLRPHLQRQLVEYERTKFQEILEETPSALDQTTEWIKESVNEELFSLSESALTPGAENTSKPSLSPTLVLNNSYLKLLQWDYQKKELPETLMTDGARLQELTEKLNQLKIIACLSLITNNMVGAITGGLPELASRLTRISAVLLEGMNKETFNLKEVLNSIGIQTCVEVNKTLMERGLPTLNAEIQANLIGQFSSIEEEDNPIWSLIDKRIKLYMRRLLCLPSPQKCMPPMPGGLAVIQQELEALGSQYANIVNLNKQVYGPFYANILRKLLFNEEAMGKVDASPPTN</sequence>
<dbReference type="EMBL" id="AK314055">
    <property type="protein sequence ID" value="BAG36762.1"/>
    <property type="molecule type" value="mRNA"/>
</dbReference>
<dbReference type="EMBL" id="AC079174">
    <property type="status" value="NOT_ANNOTATED_CDS"/>
    <property type="molecule type" value="Genomic_DNA"/>
</dbReference>
<dbReference type="EMBL" id="AC080012">
    <property type="status" value="NOT_ANNOTATED_CDS"/>
    <property type="molecule type" value="Genomic_DNA"/>
</dbReference>
<dbReference type="EMBL" id="CH471054">
    <property type="protein sequence ID" value="EAW97774.1"/>
    <property type="molecule type" value="Genomic_DNA"/>
</dbReference>
<dbReference type="EMBL" id="CH471054">
    <property type="protein sequence ID" value="EAW97775.1"/>
    <property type="molecule type" value="Genomic_DNA"/>
</dbReference>
<dbReference type="EMBL" id="BC033617">
    <property type="protein sequence ID" value="AAH33617.1"/>
    <property type="molecule type" value="mRNA"/>
</dbReference>
<dbReference type="CCDS" id="CCDS66456.1">
    <molecule id="Q8N4U5-2"/>
</dbReference>
<dbReference type="CCDS" id="CCDS9104.1">
    <molecule id="Q8N4U5-1"/>
</dbReference>
<dbReference type="RefSeq" id="NP_001273191.1">
    <molecule id="Q8N4U5-2"/>
    <property type="nucleotide sequence ID" value="NM_001286262.2"/>
</dbReference>
<dbReference type="RefSeq" id="NP_689985.1">
    <molecule id="Q8N4U5-1"/>
    <property type="nucleotide sequence ID" value="NM_152772.3"/>
</dbReference>
<dbReference type="RefSeq" id="XP_005268824.1">
    <molecule id="Q8N4U5-1"/>
    <property type="nucleotide sequence ID" value="XM_005268767.6"/>
</dbReference>
<dbReference type="RefSeq" id="XP_005268825.1">
    <molecule id="Q8N4U5-1"/>
    <property type="nucleotide sequence ID" value="XM_005268768.5"/>
</dbReference>
<dbReference type="RefSeq" id="XP_011536431.1">
    <molecule id="Q8N4U5-1"/>
    <property type="nucleotide sequence ID" value="XM_011538129.4"/>
</dbReference>
<dbReference type="RefSeq" id="XP_011536432.1">
    <molecule id="Q8N4U5-1"/>
    <property type="nucleotide sequence ID" value="XM_011538130.3"/>
</dbReference>
<dbReference type="RefSeq" id="XP_016874616.1">
    <molecule id="Q8N4U5-1"/>
    <property type="nucleotide sequence ID" value="XM_017019127.3"/>
</dbReference>
<dbReference type="RefSeq" id="XP_016874617.1">
    <property type="nucleotide sequence ID" value="XM_017019128.1"/>
</dbReference>
<dbReference type="RefSeq" id="XP_016874618.1">
    <molecule id="Q8N4U5-1"/>
    <property type="nucleotide sequence ID" value="XM_017019129.3"/>
</dbReference>
<dbReference type="RefSeq" id="XP_016874619.1">
    <molecule id="Q8N4U5-1"/>
    <property type="nucleotide sequence ID" value="XM_017019130.3"/>
</dbReference>
<dbReference type="RefSeq" id="XP_016874620.1">
    <molecule id="Q8N4U5-1"/>
    <property type="nucleotide sequence ID" value="XM_017019131.2"/>
</dbReference>
<dbReference type="RefSeq" id="XP_047284622.1">
    <molecule id="Q8N4U5-1"/>
    <property type="nucleotide sequence ID" value="XM_047428666.1"/>
</dbReference>
<dbReference type="RefSeq" id="XP_047284623.1">
    <molecule id="Q8N4U5-1"/>
    <property type="nucleotide sequence ID" value="XM_047428667.1"/>
</dbReference>
<dbReference type="RefSeq" id="XP_047284625.1">
    <molecule id="Q8N4U5-2"/>
    <property type="nucleotide sequence ID" value="XM_047428669.1"/>
</dbReference>
<dbReference type="RefSeq" id="XP_047284626.1">
    <molecule id="Q8N4U5-2"/>
    <property type="nucleotide sequence ID" value="XM_047428670.1"/>
</dbReference>
<dbReference type="RefSeq" id="XP_047284627.1">
    <molecule id="Q8N4U5-2"/>
    <property type="nucleotide sequence ID" value="XM_047428671.1"/>
</dbReference>
<dbReference type="RefSeq" id="XP_047284628.1">
    <molecule id="Q8N4U5-2"/>
    <property type="nucleotide sequence ID" value="XM_047428672.1"/>
</dbReference>
<dbReference type="RefSeq" id="XP_047284629.1">
    <molecule id="Q8N4U5-2"/>
    <property type="nucleotide sequence ID" value="XM_047428673.1"/>
</dbReference>
<dbReference type="RefSeq" id="XP_054227653.1">
    <molecule id="Q8N4U5-2"/>
    <property type="nucleotide sequence ID" value="XM_054371678.1"/>
</dbReference>
<dbReference type="RefSeq" id="XP_054227654.1">
    <molecule id="Q8N4U5-2"/>
    <property type="nucleotide sequence ID" value="XM_054371679.1"/>
</dbReference>
<dbReference type="RefSeq" id="XP_054227655.1">
    <molecule id="Q8N4U5-2"/>
    <property type="nucleotide sequence ID" value="XM_054371680.1"/>
</dbReference>
<dbReference type="RefSeq" id="XP_054227656.1">
    <molecule id="Q8N4U5-2"/>
    <property type="nucleotide sequence ID" value="XM_054371681.1"/>
</dbReference>
<dbReference type="SMR" id="Q8N4U5"/>
<dbReference type="BioGRID" id="129100">
    <property type="interactions" value="26"/>
</dbReference>
<dbReference type="FunCoup" id="Q8N4U5">
    <property type="interactions" value="616"/>
</dbReference>
<dbReference type="IntAct" id="Q8N4U5">
    <property type="interactions" value="19"/>
</dbReference>
<dbReference type="MINT" id="Q8N4U5"/>
<dbReference type="STRING" id="9606.ENSP00000299045"/>
<dbReference type="iPTMnet" id="Q8N4U5"/>
<dbReference type="PhosphoSitePlus" id="Q8N4U5"/>
<dbReference type="BioMuta" id="TCP11L2"/>
<dbReference type="DMDM" id="74728903"/>
<dbReference type="jPOST" id="Q8N4U5"/>
<dbReference type="MassIVE" id="Q8N4U5"/>
<dbReference type="PaxDb" id="9606-ENSP00000299045"/>
<dbReference type="PeptideAtlas" id="Q8N4U5"/>
<dbReference type="ProteomicsDB" id="32479"/>
<dbReference type="ProteomicsDB" id="71977">
    <molecule id="Q8N4U5-1"/>
</dbReference>
<dbReference type="Antibodypedia" id="48241">
    <property type="antibodies" value="265 antibodies from 20 providers"/>
</dbReference>
<dbReference type="DNASU" id="255394"/>
<dbReference type="Ensembl" id="ENST00000299045.8">
    <molecule id="Q8N4U5-1"/>
    <property type="protein sequence ID" value="ENSP00000299045.3"/>
    <property type="gene ID" value="ENSG00000166046.12"/>
</dbReference>
<dbReference type="Ensembl" id="ENST00000547153.5">
    <molecule id="Q8N4U5-2"/>
    <property type="protein sequence ID" value="ENSP00000448952.1"/>
    <property type="gene ID" value="ENSG00000166046.12"/>
</dbReference>
<dbReference type="Ensembl" id="ENST00000718461.1">
    <molecule id="Q8N4U5-1"/>
    <property type="protein sequence ID" value="ENSP00000520839.1"/>
    <property type="gene ID" value="ENSG00000166046.12"/>
</dbReference>
<dbReference type="GeneID" id="255394"/>
<dbReference type="KEGG" id="hsa:255394"/>
<dbReference type="MANE-Select" id="ENST00000299045.8">
    <property type="protein sequence ID" value="ENSP00000299045.3"/>
    <property type="RefSeq nucleotide sequence ID" value="NM_152772.3"/>
    <property type="RefSeq protein sequence ID" value="NP_689985.1"/>
</dbReference>
<dbReference type="UCSC" id="uc001tlm.5">
    <molecule id="Q8N4U5-1"/>
    <property type="organism name" value="human"/>
</dbReference>
<dbReference type="AGR" id="HGNC:28627"/>
<dbReference type="CTD" id="255394"/>
<dbReference type="DisGeNET" id="255394"/>
<dbReference type="GeneCards" id="TCP11L2"/>
<dbReference type="HGNC" id="HGNC:28627">
    <property type="gene designation" value="TCP11L2"/>
</dbReference>
<dbReference type="HPA" id="ENSG00000166046">
    <property type="expression patterns" value="Low tissue specificity"/>
</dbReference>
<dbReference type="MIM" id="619889">
    <property type="type" value="gene"/>
</dbReference>
<dbReference type="neXtProt" id="NX_Q8N4U5"/>
<dbReference type="OpenTargets" id="ENSG00000166046"/>
<dbReference type="PharmGKB" id="PA142670825"/>
<dbReference type="VEuPathDB" id="HostDB:ENSG00000166046"/>
<dbReference type="eggNOG" id="KOG1981">
    <property type="taxonomic scope" value="Eukaryota"/>
</dbReference>
<dbReference type="GeneTree" id="ENSGT00940000157835"/>
<dbReference type="HOGENOM" id="CLU_071976_0_0_1"/>
<dbReference type="InParanoid" id="Q8N4U5"/>
<dbReference type="OMA" id="YVINTMG"/>
<dbReference type="OrthoDB" id="276323at2759"/>
<dbReference type="PAN-GO" id="Q8N4U5">
    <property type="GO annotations" value="1 GO annotation based on evolutionary models"/>
</dbReference>
<dbReference type="PhylomeDB" id="Q8N4U5"/>
<dbReference type="TreeFam" id="TF313385"/>
<dbReference type="PathwayCommons" id="Q8N4U5"/>
<dbReference type="SignaLink" id="Q8N4U5"/>
<dbReference type="BioGRID-ORCS" id="255394">
    <property type="hits" value="7 hits in 1153 CRISPR screens"/>
</dbReference>
<dbReference type="ChiTaRS" id="TCP11L2">
    <property type="organism name" value="human"/>
</dbReference>
<dbReference type="GenomeRNAi" id="255394"/>
<dbReference type="Pharos" id="Q8N4U5">
    <property type="development level" value="Tdark"/>
</dbReference>
<dbReference type="PRO" id="PR:Q8N4U5"/>
<dbReference type="Proteomes" id="UP000005640">
    <property type="component" value="Chromosome 12"/>
</dbReference>
<dbReference type="RNAct" id="Q8N4U5">
    <property type="molecule type" value="protein"/>
</dbReference>
<dbReference type="Bgee" id="ENSG00000166046">
    <property type="expression patterns" value="Expressed in bone marrow cell and 167 other cell types or tissues"/>
</dbReference>
<dbReference type="ExpressionAtlas" id="Q8N4U5">
    <property type="expression patterns" value="baseline and differential"/>
</dbReference>
<dbReference type="GO" id="GO:0005737">
    <property type="term" value="C:cytoplasm"/>
    <property type="evidence" value="ECO:0000250"/>
    <property type="project" value="UniProtKB"/>
</dbReference>
<dbReference type="GO" id="GO:0005856">
    <property type="term" value="C:cytoskeleton"/>
    <property type="evidence" value="ECO:0007669"/>
    <property type="project" value="UniProtKB-SubCell"/>
</dbReference>
<dbReference type="GO" id="GO:0014812">
    <property type="term" value="P:muscle cell migration"/>
    <property type="evidence" value="ECO:0000250"/>
    <property type="project" value="UniProtKB"/>
</dbReference>
<dbReference type="GO" id="GO:0007165">
    <property type="term" value="P:signal transduction"/>
    <property type="evidence" value="ECO:0000318"/>
    <property type="project" value="GO_Central"/>
</dbReference>
<dbReference type="InterPro" id="IPR008862">
    <property type="entry name" value="Tcp11"/>
</dbReference>
<dbReference type="PANTHER" id="PTHR12832:SF17">
    <property type="entry name" value="T-COMPLEX PROTEIN 11-LIKE PROTEIN 2"/>
    <property type="match status" value="1"/>
</dbReference>
<dbReference type="PANTHER" id="PTHR12832">
    <property type="entry name" value="TESTIS-SPECIFIC PROTEIN PBS13 T-COMPLEX 11"/>
    <property type="match status" value="1"/>
</dbReference>
<dbReference type="Pfam" id="PF05794">
    <property type="entry name" value="Tcp11"/>
    <property type="match status" value="1"/>
</dbReference>
<proteinExistence type="evidence at protein level"/>
<feature type="chain" id="PRO_0000313750" description="T-complex protein 11-like protein 2">
    <location>
        <begin position="1"/>
        <end position="519"/>
    </location>
</feature>
<feature type="region of interest" description="Disordered" evidence="3">
    <location>
        <begin position="1"/>
        <end position="30"/>
    </location>
</feature>
<feature type="compositionally biased region" description="Low complexity" evidence="3">
    <location>
        <begin position="17"/>
        <end position="29"/>
    </location>
</feature>
<feature type="modified residue" description="Phosphoserine" evidence="2">
    <location>
        <position position="16"/>
    </location>
</feature>
<feature type="splice variant" id="VSP_055736" description="In isoform 2." evidence="5">
    <original>SALDQTTEW</original>
    <variation>RKAEVAGAS</variation>
    <location>
        <begin position="258"/>
        <end position="266"/>
    </location>
</feature>
<feature type="splice variant" id="VSP_055737" description="In isoform 2." evidence="5">
    <location>
        <begin position="267"/>
        <end position="519"/>
    </location>
</feature>
<feature type="sequence variant" id="VAR_037728" description="In dbSNP:rs4964460." evidence="4">
    <original>A</original>
    <variation>T</variation>
    <location>
        <position position="41"/>
    </location>
</feature>
<feature type="sequence variant" id="VAR_037729" description="In dbSNP:rs11837375.">
    <original>A</original>
    <variation>S</variation>
    <location>
        <position position="82"/>
    </location>
</feature>
<feature type="sequence variant" id="VAR_037730" description="In dbSNP:rs17218950.">
    <original>D</original>
    <variation>N</variation>
    <location>
        <position position="261"/>
    </location>
</feature>
<feature type="sequence conflict" description="In Ref. 1; BAG36762." evidence="5" ref="1">
    <original>R</original>
    <variation>G</variation>
    <location>
        <position position="137"/>
    </location>
</feature>
<feature type="sequence conflict" description="In Ref. 1; BAG36762." evidence="5" ref="1">
    <original>V</original>
    <variation>A</variation>
    <location>
        <position position="158"/>
    </location>
</feature>
<reference key="1">
    <citation type="journal article" date="2004" name="Nat. Genet.">
        <title>Complete sequencing and characterization of 21,243 full-length human cDNAs.</title>
        <authorList>
            <person name="Ota T."/>
            <person name="Suzuki Y."/>
            <person name="Nishikawa T."/>
            <person name="Otsuki T."/>
            <person name="Sugiyama T."/>
            <person name="Irie R."/>
            <person name="Wakamatsu A."/>
            <person name="Hayashi K."/>
            <person name="Sato H."/>
            <person name="Nagai K."/>
            <person name="Kimura K."/>
            <person name="Makita H."/>
            <person name="Sekine M."/>
            <person name="Obayashi M."/>
            <person name="Nishi T."/>
            <person name="Shibahara T."/>
            <person name="Tanaka T."/>
            <person name="Ishii S."/>
            <person name="Yamamoto J."/>
            <person name="Saito K."/>
            <person name="Kawai Y."/>
            <person name="Isono Y."/>
            <person name="Nakamura Y."/>
            <person name="Nagahari K."/>
            <person name="Murakami K."/>
            <person name="Yasuda T."/>
            <person name="Iwayanagi T."/>
            <person name="Wagatsuma M."/>
            <person name="Shiratori A."/>
            <person name="Sudo H."/>
            <person name="Hosoiri T."/>
            <person name="Kaku Y."/>
            <person name="Kodaira H."/>
            <person name="Kondo H."/>
            <person name="Sugawara M."/>
            <person name="Takahashi M."/>
            <person name="Kanda K."/>
            <person name="Yokoi T."/>
            <person name="Furuya T."/>
            <person name="Kikkawa E."/>
            <person name="Omura Y."/>
            <person name="Abe K."/>
            <person name="Kamihara K."/>
            <person name="Katsuta N."/>
            <person name="Sato K."/>
            <person name="Tanikawa M."/>
            <person name="Yamazaki M."/>
            <person name="Ninomiya K."/>
            <person name="Ishibashi T."/>
            <person name="Yamashita H."/>
            <person name="Murakawa K."/>
            <person name="Fujimori K."/>
            <person name="Tanai H."/>
            <person name="Kimata M."/>
            <person name="Watanabe M."/>
            <person name="Hiraoka S."/>
            <person name="Chiba Y."/>
            <person name="Ishida S."/>
            <person name="Ono Y."/>
            <person name="Takiguchi S."/>
            <person name="Watanabe S."/>
            <person name="Yosida M."/>
            <person name="Hotuta T."/>
            <person name="Kusano J."/>
            <person name="Kanehori K."/>
            <person name="Takahashi-Fujii A."/>
            <person name="Hara H."/>
            <person name="Tanase T.-O."/>
            <person name="Nomura Y."/>
            <person name="Togiya S."/>
            <person name="Komai F."/>
            <person name="Hara R."/>
            <person name="Takeuchi K."/>
            <person name="Arita M."/>
            <person name="Imose N."/>
            <person name="Musashino K."/>
            <person name="Yuuki H."/>
            <person name="Oshima A."/>
            <person name="Sasaki N."/>
            <person name="Aotsuka S."/>
            <person name="Yoshikawa Y."/>
            <person name="Matsunawa H."/>
            <person name="Ichihara T."/>
            <person name="Shiohata N."/>
            <person name="Sano S."/>
            <person name="Moriya S."/>
            <person name="Momiyama H."/>
            <person name="Satoh N."/>
            <person name="Takami S."/>
            <person name="Terashima Y."/>
            <person name="Suzuki O."/>
            <person name="Nakagawa S."/>
            <person name="Senoh A."/>
            <person name="Mizoguchi H."/>
            <person name="Goto Y."/>
            <person name="Shimizu F."/>
            <person name="Wakebe H."/>
            <person name="Hishigaki H."/>
            <person name="Watanabe T."/>
            <person name="Sugiyama A."/>
            <person name="Takemoto M."/>
            <person name="Kawakami B."/>
            <person name="Yamazaki M."/>
            <person name="Watanabe K."/>
            <person name="Kumagai A."/>
            <person name="Itakura S."/>
            <person name="Fukuzumi Y."/>
            <person name="Fujimori Y."/>
            <person name="Komiyama M."/>
            <person name="Tashiro H."/>
            <person name="Tanigami A."/>
            <person name="Fujiwara T."/>
            <person name="Ono T."/>
            <person name="Yamada K."/>
            <person name="Fujii Y."/>
            <person name="Ozaki K."/>
            <person name="Hirao M."/>
            <person name="Ohmori Y."/>
            <person name="Kawabata A."/>
            <person name="Hikiji T."/>
            <person name="Kobatake N."/>
            <person name="Inagaki H."/>
            <person name="Ikema Y."/>
            <person name="Okamoto S."/>
            <person name="Okitani R."/>
            <person name="Kawakami T."/>
            <person name="Noguchi S."/>
            <person name="Itoh T."/>
            <person name="Shigeta K."/>
            <person name="Senba T."/>
            <person name="Matsumura K."/>
            <person name="Nakajima Y."/>
            <person name="Mizuno T."/>
            <person name="Morinaga M."/>
            <person name="Sasaki M."/>
            <person name="Togashi T."/>
            <person name="Oyama M."/>
            <person name="Hata H."/>
            <person name="Watanabe M."/>
            <person name="Komatsu T."/>
            <person name="Mizushima-Sugano J."/>
            <person name="Satoh T."/>
            <person name="Shirai Y."/>
            <person name="Takahashi Y."/>
            <person name="Nakagawa K."/>
            <person name="Okumura K."/>
            <person name="Nagase T."/>
            <person name="Nomura N."/>
            <person name="Kikuchi H."/>
            <person name="Masuho Y."/>
            <person name="Yamashita R."/>
            <person name="Nakai K."/>
            <person name="Yada T."/>
            <person name="Nakamura Y."/>
            <person name="Ohara O."/>
            <person name="Isogai T."/>
            <person name="Sugano S."/>
        </authorList>
    </citation>
    <scope>NUCLEOTIDE SEQUENCE [LARGE SCALE MRNA]</scope>
    <scope>VARIANT THR-41</scope>
    <source>
        <tissue>Thymus</tissue>
    </source>
</reference>
<reference key="2">
    <citation type="journal article" date="2006" name="Nature">
        <title>The finished DNA sequence of human chromosome 12.</title>
        <authorList>
            <person name="Scherer S.E."/>
            <person name="Muzny D.M."/>
            <person name="Buhay C.J."/>
            <person name="Chen R."/>
            <person name="Cree A."/>
            <person name="Ding Y."/>
            <person name="Dugan-Rocha S."/>
            <person name="Gill R."/>
            <person name="Gunaratne P."/>
            <person name="Harris R.A."/>
            <person name="Hawes A.C."/>
            <person name="Hernandez J."/>
            <person name="Hodgson A.V."/>
            <person name="Hume J."/>
            <person name="Jackson A."/>
            <person name="Khan Z.M."/>
            <person name="Kovar-Smith C."/>
            <person name="Lewis L.R."/>
            <person name="Lozado R.J."/>
            <person name="Metzker M.L."/>
            <person name="Milosavljevic A."/>
            <person name="Miner G.R."/>
            <person name="Montgomery K.T."/>
            <person name="Morgan M.B."/>
            <person name="Nazareth L.V."/>
            <person name="Scott G."/>
            <person name="Sodergren E."/>
            <person name="Song X.-Z."/>
            <person name="Steffen D."/>
            <person name="Lovering R.C."/>
            <person name="Wheeler D.A."/>
            <person name="Worley K.C."/>
            <person name="Yuan Y."/>
            <person name="Zhang Z."/>
            <person name="Adams C.Q."/>
            <person name="Ansari-Lari M.A."/>
            <person name="Ayele M."/>
            <person name="Brown M.J."/>
            <person name="Chen G."/>
            <person name="Chen Z."/>
            <person name="Clerc-Blankenburg K.P."/>
            <person name="Davis C."/>
            <person name="Delgado O."/>
            <person name="Dinh H.H."/>
            <person name="Draper H."/>
            <person name="Gonzalez-Garay M.L."/>
            <person name="Havlak P."/>
            <person name="Jackson L.R."/>
            <person name="Jacob L.S."/>
            <person name="Kelly S.H."/>
            <person name="Li L."/>
            <person name="Li Z."/>
            <person name="Liu J."/>
            <person name="Liu W."/>
            <person name="Lu J."/>
            <person name="Maheshwari M."/>
            <person name="Nguyen B.-V."/>
            <person name="Okwuonu G.O."/>
            <person name="Pasternak S."/>
            <person name="Perez L.M."/>
            <person name="Plopper F.J.H."/>
            <person name="Santibanez J."/>
            <person name="Shen H."/>
            <person name="Tabor P.E."/>
            <person name="Verduzco D."/>
            <person name="Waldron L."/>
            <person name="Wang Q."/>
            <person name="Williams G.A."/>
            <person name="Zhang J."/>
            <person name="Zhou J."/>
            <person name="Allen C.C."/>
            <person name="Amin A.G."/>
            <person name="Anyalebechi V."/>
            <person name="Bailey M."/>
            <person name="Barbaria J.A."/>
            <person name="Bimage K.E."/>
            <person name="Bryant N.P."/>
            <person name="Burch P.E."/>
            <person name="Burkett C.E."/>
            <person name="Burrell K.L."/>
            <person name="Calderon E."/>
            <person name="Cardenas V."/>
            <person name="Carter K."/>
            <person name="Casias K."/>
            <person name="Cavazos I."/>
            <person name="Cavazos S.R."/>
            <person name="Ceasar H."/>
            <person name="Chacko J."/>
            <person name="Chan S.N."/>
            <person name="Chavez D."/>
            <person name="Christopoulos C."/>
            <person name="Chu J."/>
            <person name="Cockrell R."/>
            <person name="Cox C.D."/>
            <person name="Dang M."/>
            <person name="Dathorne S.R."/>
            <person name="David R."/>
            <person name="Davis C.M."/>
            <person name="Davy-Carroll L."/>
            <person name="Deshazo D.R."/>
            <person name="Donlin J.E."/>
            <person name="D'Souza L."/>
            <person name="Eaves K.A."/>
            <person name="Egan A."/>
            <person name="Emery-Cohen A.J."/>
            <person name="Escotto M."/>
            <person name="Flagg N."/>
            <person name="Forbes L.D."/>
            <person name="Gabisi A.M."/>
            <person name="Garza M."/>
            <person name="Hamilton C."/>
            <person name="Henderson N."/>
            <person name="Hernandez O."/>
            <person name="Hines S."/>
            <person name="Hogues M.E."/>
            <person name="Huang M."/>
            <person name="Idlebird D.G."/>
            <person name="Johnson R."/>
            <person name="Jolivet A."/>
            <person name="Jones S."/>
            <person name="Kagan R."/>
            <person name="King L.M."/>
            <person name="Leal B."/>
            <person name="Lebow H."/>
            <person name="Lee S."/>
            <person name="LeVan J.M."/>
            <person name="Lewis L.C."/>
            <person name="London P."/>
            <person name="Lorensuhewa L.M."/>
            <person name="Loulseged H."/>
            <person name="Lovett D.A."/>
            <person name="Lucier A."/>
            <person name="Lucier R.L."/>
            <person name="Ma J."/>
            <person name="Madu R.C."/>
            <person name="Mapua P."/>
            <person name="Martindale A.D."/>
            <person name="Martinez E."/>
            <person name="Massey E."/>
            <person name="Mawhiney S."/>
            <person name="Meador M.G."/>
            <person name="Mendez S."/>
            <person name="Mercado C."/>
            <person name="Mercado I.C."/>
            <person name="Merritt C.E."/>
            <person name="Miner Z.L."/>
            <person name="Minja E."/>
            <person name="Mitchell T."/>
            <person name="Mohabbat F."/>
            <person name="Mohabbat K."/>
            <person name="Montgomery B."/>
            <person name="Moore N."/>
            <person name="Morris S."/>
            <person name="Munidasa M."/>
            <person name="Ngo R.N."/>
            <person name="Nguyen N.B."/>
            <person name="Nickerson E."/>
            <person name="Nwaokelemeh O.O."/>
            <person name="Nwokenkwo S."/>
            <person name="Obregon M."/>
            <person name="Oguh M."/>
            <person name="Oragunye N."/>
            <person name="Oviedo R.J."/>
            <person name="Parish B.J."/>
            <person name="Parker D.N."/>
            <person name="Parrish J."/>
            <person name="Parks K.L."/>
            <person name="Paul H.A."/>
            <person name="Payton B.A."/>
            <person name="Perez A."/>
            <person name="Perrin W."/>
            <person name="Pickens A."/>
            <person name="Primus E.L."/>
            <person name="Pu L.-L."/>
            <person name="Puazo M."/>
            <person name="Quiles M.M."/>
            <person name="Quiroz J.B."/>
            <person name="Rabata D."/>
            <person name="Reeves K."/>
            <person name="Ruiz S.J."/>
            <person name="Shao H."/>
            <person name="Sisson I."/>
            <person name="Sonaike T."/>
            <person name="Sorelle R.P."/>
            <person name="Sutton A.E."/>
            <person name="Svatek A.F."/>
            <person name="Svetz L.A."/>
            <person name="Tamerisa K.S."/>
            <person name="Taylor T.R."/>
            <person name="Teague B."/>
            <person name="Thomas N."/>
            <person name="Thorn R.D."/>
            <person name="Trejos Z.Y."/>
            <person name="Trevino B.K."/>
            <person name="Ukegbu O.N."/>
            <person name="Urban J.B."/>
            <person name="Vasquez L.I."/>
            <person name="Vera V.A."/>
            <person name="Villasana D.M."/>
            <person name="Wang L."/>
            <person name="Ward-Moore S."/>
            <person name="Warren J.T."/>
            <person name="Wei X."/>
            <person name="White F."/>
            <person name="Williamson A.L."/>
            <person name="Wleczyk R."/>
            <person name="Wooden H.S."/>
            <person name="Wooden S.H."/>
            <person name="Yen J."/>
            <person name="Yoon L."/>
            <person name="Yoon V."/>
            <person name="Zorrilla S.E."/>
            <person name="Nelson D."/>
            <person name="Kucherlapati R."/>
            <person name="Weinstock G."/>
            <person name="Gibbs R.A."/>
        </authorList>
    </citation>
    <scope>NUCLEOTIDE SEQUENCE [LARGE SCALE GENOMIC DNA]</scope>
</reference>
<reference key="3">
    <citation type="submission" date="2005-07" db="EMBL/GenBank/DDBJ databases">
        <authorList>
            <person name="Mural R.J."/>
            <person name="Istrail S."/>
            <person name="Sutton G.G."/>
            <person name="Florea L."/>
            <person name="Halpern A.L."/>
            <person name="Mobarry C.M."/>
            <person name="Lippert R."/>
            <person name="Walenz B."/>
            <person name="Shatkay H."/>
            <person name="Dew I."/>
            <person name="Miller J.R."/>
            <person name="Flanigan M.J."/>
            <person name="Edwards N.J."/>
            <person name="Bolanos R."/>
            <person name="Fasulo D."/>
            <person name="Halldorsson B.V."/>
            <person name="Hannenhalli S."/>
            <person name="Turner R."/>
            <person name="Yooseph S."/>
            <person name="Lu F."/>
            <person name="Nusskern D.R."/>
            <person name="Shue B.C."/>
            <person name="Zheng X.H."/>
            <person name="Zhong F."/>
            <person name="Delcher A.L."/>
            <person name="Huson D.H."/>
            <person name="Kravitz S.A."/>
            <person name="Mouchard L."/>
            <person name="Reinert K."/>
            <person name="Remington K.A."/>
            <person name="Clark A.G."/>
            <person name="Waterman M.S."/>
            <person name="Eichler E.E."/>
            <person name="Adams M.D."/>
            <person name="Hunkapiller M.W."/>
            <person name="Myers E.W."/>
            <person name="Venter J.C."/>
        </authorList>
    </citation>
    <scope>NUCLEOTIDE SEQUENCE [LARGE SCALE GENOMIC DNA]</scope>
</reference>
<reference key="4">
    <citation type="journal article" date="2004" name="Genome Res.">
        <title>The status, quality, and expansion of the NIH full-length cDNA project: the Mammalian Gene Collection (MGC).</title>
        <authorList>
            <consortium name="The MGC Project Team"/>
        </authorList>
    </citation>
    <scope>NUCLEOTIDE SEQUENCE [LARGE SCALE MRNA]</scope>
    <source>
        <tissue>Brain</tissue>
    </source>
</reference>
<comment type="function">
    <text evidence="1">Promotes the migration of muscle-derived satellite cells (MDSCs) during differentiation throught interaction with FMNL2 and therefore may participate in microfilament assembly.</text>
</comment>
<comment type="subunit">
    <text evidence="1">Interacts with FMNL2; this interaction promotes muscle-derived satellite cell (MDSC) migration and differentiation.</text>
</comment>
<comment type="interaction">
    <interactant intactId="EBI-11897462">
        <id>Q8N4U5</id>
    </interactant>
    <interactant intactId="EBI-698810">
        <id>P62736</id>
        <label>ACTA2</label>
    </interactant>
    <organismsDiffer>false</organismsDiffer>
    <experiments>2</experiments>
</comment>
<comment type="interaction">
    <interactant intactId="EBI-11897462">
        <id>Q8N4U5</id>
    </interactant>
    <interactant intactId="EBI-10988864">
        <id>P46379-2</id>
        <label>BAG6</label>
    </interactant>
    <organismsDiffer>false</organismsDiffer>
    <experiments>3</experiments>
</comment>
<comment type="interaction">
    <interactant intactId="EBI-11897462">
        <id>Q8N4U5</id>
    </interactant>
    <interactant intactId="EBI-12743307">
        <id>Q9P0U4-2</id>
        <label>CXXC1</label>
    </interactant>
    <organismsDiffer>false</organismsDiffer>
    <experiments>3</experiments>
</comment>
<comment type="interaction">
    <interactant intactId="EBI-11897462">
        <id>Q8N4U5</id>
    </interactant>
    <interactant intactId="EBI-740220">
        <id>O14964</id>
        <label>HGS</label>
    </interactant>
    <organismsDiffer>false</organismsDiffer>
    <experiments>3</experiments>
</comment>
<comment type="interaction">
    <interactant intactId="EBI-11897462">
        <id>Q8N4U5</id>
    </interactant>
    <interactant intactId="EBI-948266">
        <id>O14901</id>
        <label>KLF11</label>
    </interactant>
    <organismsDiffer>false</organismsDiffer>
    <experiments>3</experiments>
</comment>
<comment type="interaction">
    <interactant intactId="EBI-11897462">
        <id>Q8N4U5</id>
    </interactant>
    <interactant intactId="EBI-2551023">
        <id>Q6PEY2</id>
        <label>TUBA3E</label>
    </interactant>
    <organismsDiffer>false</organismsDiffer>
    <experiments>2</experiments>
</comment>
<comment type="interaction">
    <interactant intactId="EBI-11897462">
        <id>Q8N4U5</id>
    </interactant>
    <interactant intactId="EBI-351772">
        <id>P68366</id>
        <label>TUBA4A</label>
    </interactant>
    <organismsDiffer>false</organismsDiffer>
    <experiments>6</experiments>
</comment>
<comment type="interaction">
    <interactant intactId="EBI-11897462">
        <id>Q8N4U5</id>
    </interactant>
    <interactant intactId="EBI-356246">
        <id>Q9NY65</id>
        <label>TUBA8</label>
    </interactant>
    <organismsDiffer>false</organismsDiffer>
    <experiments>3</experiments>
</comment>
<comment type="subcellular location">
    <subcellularLocation>
        <location evidence="1">Cytoplasm</location>
        <location evidence="1">Cytoskeleton</location>
    </subcellularLocation>
    <text evidence="1">Accumulates around the actin complex before the formation of microfilament bundles and microtubule extension.</text>
</comment>
<comment type="alternative products">
    <event type="alternative splicing"/>
    <isoform>
        <id>Q8N4U5-1</id>
        <name>1</name>
        <sequence type="displayed"/>
    </isoform>
    <isoform>
        <id>Q8N4U5-2</id>
        <name>2</name>
        <sequence type="described" ref="VSP_055736 VSP_055737"/>
    </isoform>
</comment>
<comment type="similarity">
    <text evidence="5">Belongs to the TCP11 family.</text>
</comment>
<protein>
    <recommendedName>
        <fullName evidence="5">T-complex protein 11-like protein 2</fullName>
    </recommendedName>
</protein>
<accession>Q8N4U5</accession>
<accession>B2RA65</accession>
<accession>G3V1Y9</accession>
<name>T11L2_HUMAN</name>
<gene>
    <name evidence="6" type="primary">TCP11L2</name>
</gene>
<evidence type="ECO:0000250" key="1">
    <source>
        <dbReference type="UniProtKB" id="A7Z033"/>
    </source>
</evidence>
<evidence type="ECO:0000250" key="2">
    <source>
        <dbReference type="UniProtKB" id="Q568Z0"/>
    </source>
</evidence>
<evidence type="ECO:0000256" key="3">
    <source>
        <dbReference type="SAM" id="MobiDB-lite"/>
    </source>
</evidence>
<evidence type="ECO:0000269" key="4">
    <source>
    </source>
</evidence>
<evidence type="ECO:0000305" key="5"/>
<evidence type="ECO:0000312" key="6">
    <source>
        <dbReference type="HGNC" id="HGNC:28627"/>
    </source>
</evidence>